<dbReference type="EC" id="6.3.2.9" evidence="1"/>
<dbReference type="EMBL" id="CP000260">
    <property type="protein sequence ID" value="ABF34334.1"/>
    <property type="molecule type" value="Genomic_DNA"/>
</dbReference>
<dbReference type="SMR" id="Q1JG10"/>
<dbReference type="KEGG" id="sph:MGAS10270_Spy1269"/>
<dbReference type="HOGENOM" id="CLU_032540_0_1_9"/>
<dbReference type="UniPathway" id="UPA00219"/>
<dbReference type="Proteomes" id="UP000002436">
    <property type="component" value="Chromosome"/>
</dbReference>
<dbReference type="GO" id="GO:0005737">
    <property type="term" value="C:cytoplasm"/>
    <property type="evidence" value="ECO:0007669"/>
    <property type="project" value="UniProtKB-SubCell"/>
</dbReference>
<dbReference type="GO" id="GO:0005524">
    <property type="term" value="F:ATP binding"/>
    <property type="evidence" value="ECO:0007669"/>
    <property type="project" value="UniProtKB-UniRule"/>
</dbReference>
<dbReference type="GO" id="GO:0008764">
    <property type="term" value="F:UDP-N-acetylmuramoylalanine-D-glutamate ligase activity"/>
    <property type="evidence" value="ECO:0007669"/>
    <property type="project" value="UniProtKB-UniRule"/>
</dbReference>
<dbReference type="GO" id="GO:0051301">
    <property type="term" value="P:cell division"/>
    <property type="evidence" value="ECO:0007669"/>
    <property type="project" value="UniProtKB-KW"/>
</dbReference>
<dbReference type="GO" id="GO:0071555">
    <property type="term" value="P:cell wall organization"/>
    <property type="evidence" value="ECO:0007669"/>
    <property type="project" value="UniProtKB-KW"/>
</dbReference>
<dbReference type="GO" id="GO:0009252">
    <property type="term" value="P:peptidoglycan biosynthetic process"/>
    <property type="evidence" value="ECO:0007669"/>
    <property type="project" value="UniProtKB-UniRule"/>
</dbReference>
<dbReference type="GO" id="GO:0008360">
    <property type="term" value="P:regulation of cell shape"/>
    <property type="evidence" value="ECO:0007669"/>
    <property type="project" value="UniProtKB-KW"/>
</dbReference>
<dbReference type="Gene3D" id="3.90.190.20">
    <property type="entry name" value="Mur ligase, C-terminal domain"/>
    <property type="match status" value="1"/>
</dbReference>
<dbReference type="Gene3D" id="3.40.1190.10">
    <property type="entry name" value="Mur-like, catalytic domain"/>
    <property type="match status" value="1"/>
</dbReference>
<dbReference type="Gene3D" id="3.40.50.720">
    <property type="entry name" value="NAD(P)-binding Rossmann-like Domain"/>
    <property type="match status" value="1"/>
</dbReference>
<dbReference type="HAMAP" id="MF_00639">
    <property type="entry name" value="MurD"/>
    <property type="match status" value="1"/>
</dbReference>
<dbReference type="InterPro" id="IPR036565">
    <property type="entry name" value="Mur-like_cat_sf"/>
</dbReference>
<dbReference type="InterPro" id="IPR004101">
    <property type="entry name" value="Mur_ligase_C"/>
</dbReference>
<dbReference type="InterPro" id="IPR036615">
    <property type="entry name" value="Mur_ligase_C_dom_sf"/>
</dbReference>
<dbReference type="InterPro" id="IPR013221">
    <property type="entry name" value="Mur_ligase_cen"/>
</dbReference>
<dbReference type="InterPro" id="IPR005762">
    <property type="entry name" value="MurD"/>
</dbReference>
<dbReference type="NCBIfam" id="TIGR01087">
    <property type="entry name" value="murD"/>
    <property type="match status" value="1"/>
</dbReference>
<dbReference type="PANTHER" id="PTHR43692">
    <property type="entry name" value="UDP-N-ACETYLMURAMOYLALANINE--D-GLUTAMATE LIGASE"/>
    <property type="match status" value="1"/>
</dbReference>
<dbReference type="PANTHER" id="PTHR43692:SF1">
    <property type="entry name" value="UDP-N-ACETYLMURAMOYLALANINE--D-GLUTAMATE LIGASE"/>
    <property type="match status" value="1"/>
</dbReference>
<dbReference type="Pfam" id="PF02875">
    <property type="entry name" value="Mur_ligase_C"/>
    <property type="match status" value="1"/>
</dbReference>
<dbReference type="Pfam" id="PF08245">
    <property type="entry name" value="Mur_ligase_M"/>
    <property type="match status" value="1"/>
</dbReference>
<dbReference type="Pfam" id="PF21799">
    <property type="entry name" value="MurD-like_N"/>
    <property type="match status" value="1"/>
</dbReference>
<dbReference type="SUPFAM" id="SSF51984">
    <property type="entry name" value="MurCD N-terminal domain"/>
    <property type="match status" value="1"/>
</dbReference>
<dbReference type="SUPFAM" id="SSF53623">
    <property type="entry name" value="MurD-like peptide ligases, catalytic domain"/>
    <property type="match status" value="1"/>
</dbReference>
<dbReference type="SUPFAM" id="SSF53244">
    <property type="entry name" value="MurD-like peptide ligases, peptide-binding domain"/>
    <property type="match status" value="1"/>
</dbReference>
<accession>Q1JG10</accession>
<gene>
    <name evidence="1" type="primary">murD</name>
    <name type="ordered locus">MGAS10270_Spy1269</name>
</gene>
<keyword id="KW-0067">ATP-binding</keyword>
<keyword id="KW-0131">Cell cycle</keyword>
<keyword id="KW-0132">Cell division</keyword>
<keyword id="KW-0133">Cell shape</keyword>
<keyword id="KW-0961">Cell wall biogenesis/degradation</keyword>
<keyword id="KW-0963">Cytoplasm</keyword>
<keyword id="KW-0436">Ligase</keyword>
<keyword id="KW-0547">Nucleotide-binding</keyword>
<keyword id="KW-0573">Peptidoglycan synthesis</keyword>
<feature type="chain" id="PRO_0000257249" description="UDP-N-acetylmuramoylalanine--D-glutamate ligase">
    <location>
        <begin position="1"/>
        <end position="452"/>
    </location>
</feature>
<feature type="binding site" evidence="1">
    <location>
        <begin position="119"/>
        <end position="125"/>
    </location>
    <ligand>
        <name>ATP</name>
        <dbReference type="ChEBI" id="CHEBI:30616"/>
    </ligand>
</feature>
<sequence>MKVISNFQNKKILILGLAKSGEAAAKLLTKLGALVTVNDSKPFDQNPAAQALLEEGIKVICGSHPVELLDEDFEYMVKNPGIPYDNPMVKRALAKEIPILTEVELAYFVSEAPIIGITGSNGKTTTTTMIADVLNAGGQSALLSGNIGYPASKVVQKAIAGDTLVMELSSFQLVGVNAFRPHIAVITNLMPTHLDYHGSFEDYVAAKWMIQAQMTESDYLILNANQEISATLAKTTQATVIPFSTQKVVDGAYLKDGILYFKEQAIIAATDLGVPGSHNIENALATIAVAKLSGIADDIIAQCLSHFGGVKHRLQRVGQIKDITFYNDSKSTNILATQKALSGFDNSRLILIAGGLDRGNEFDDLVPDLLGLKQMIILGESAERMKRAANKAEVSYLEARNVAEATELAFKLAQTGDTILLSPANASWDMYPNFEVRGDEFLATFDCLRGDA</sequence>
<protein>
    <recommendedName>
        <fullName evidence="1">UDP-N-acetylmuramoylalanine--D-glutamate ligase</fullName>
        <ecNumber evidence="1">6.3.2.9</ecNumber>
    </recommendedName>
    <alternativeName>
        <fullName evidence="1">D-glutamic acid-adding enzyme</fullName>
    </alternativeName>
    <alternativeName>
        <fullName evidence="1">UDP-N-acetylmuramoyl-L-alanyl-D-glutamate synthetase</fullName>
    </alternativeName>
</protein>
<organism>
    <name type="scientific">Streptococcus pyogenes serotype M2 (strain MGAS10270)</name>
    <dbReference type="NCBI Taxonomy" id="370552"/>
    <lineage>
        <taxon>Bacteria</taxon>
        <taxon>Bacillati</taxon>
        <taxon>Bacillota</taxon>
        <taxon>Bacilli</taxon>
        <taxon>Lactobacillales</taxon>
        <taxon>Streptococcaceae</taxon>
        <taxon>Streptococcus</taxon>
    </lineage>
</organism>
<name>MURD_STRPD</name>
<reference key="1">
    <citation type="journal article" date="2006" name="Proc. Natl. Acad. Sci. U.S.A.">
        <title>Molecular genetic anatomy of inter- and intraserotype variation in the human bacterial pathogen group A Streptococcus.</title>
        <authorList>
            <person name="Beres S.B."/>
            <person name="Richter E.W."/>
            <person name="Nagiec M.J."/>
            <person name="Sumby P."/>
            <person name="Porcella S.F."/>
            <person name="DeLeo F.R."/>
            <person name="Musser J.M."/>
        </authorList>
    </citation>
    <scope>NUCLEOTIDE SEQUENCE [LARGE SCALE GENOMIC DNA]</scope>
    <source>
        <strain>MGAS10270</strain>
    </source>
</reference>
<comment type="function">
    <text evidence="1">Cell wall formation. Catalyzes the addition of glutamate to the nucleotide precursor UDP-N-acetylmuramoyl-L-alanine (UMA).</text>
</comment>
<comment type="catalytic activity">
    <reaction evidence="1">
        <text>UDP-N-acetyl-alpha-D-muramoyl-L-alanine + D-glutamate + ATP = UDP-N-acetyl-alpha-D-muramoyl-L-alanyl-D-glutamate + ADP + phosphate + H(+)</text>
        <dbReference type="Rhea" id="RHEA:16429"/>
        <dbReference type="ChEBI" id="CHEBI:15378"/>
        <dbReference type="ChEBI" id="CHEBI:29986"/>
        <dbReference type="ChEBI" id="CHEBI:30616"/>
        <dbReference type="ChEBI" id="CHEBI:43474"/>
        <dbReference type="ChEBI" id="CHEBI:83898"/>
        <dbReference type="ChEBI" id="CHEBI:83900"/>
        <dbReference type="ChEBI" id="CHEBI:456216"/>
        <dbReference type="EC" id="6.3.2.9"/>
    </reaction>
</comment>
<comment type="pathway">
    <text evidence="1">Cell wall biogenesis; peptidoglycan biosynthesis.</text>
</comment>
<comment type="subcellular location">
    <subcellularLocation>
        <location evidence="1">Cytoplasm</location>
    </subcellularLocation>
</comment>
<comment type="similarity">
    <text evidence="1">Belongs to the MurCDEF family.</text>
</comment>
<evidence type="ECO:0000255" key="1">
    <source>
        <dbReference type="HAMAP-Rule" id="MF_00639"/>
    </source>
</evidence>
<proteinExistence type="inferred from homology"/>